<name>NDHH_COFAR</name>
<keyword id="KW-0150">Chloroplast</keyword>
<keyword id="KW-0472">Membrane</keyword>
<keyword id="KW-0520">NAD</keyword>
<keyword id="KW-0521">NADP</keyword>
<keyword id="KW-0934">Plastid</keyword>
<keyword id="KW-0618">Plastoquinone</keyword>
<keyword id="KW-0874">Quinone</keyword>
<keyword id="KW-1185">Reference proteome</keyword>
<keyword id="KW-0793">Thylakoid</keyword>
<keyword id="KW-1278">Translocase</keyword>
<keyword id="KW-0813">Transport</keyword>
<sequence length="395" mass="45742">MTVPATRKDLMIVNMGPHHPSMHGVLRLIVTLDGEDVIDCEPILGYLHRGMEKIAENRTIVQYLPYVTRWDYLATMFTEAITVNGPEQLGNIQVPKRASYIRAILLELSRIASHLLWLGPFMADIGAQTPFFYIFRERELIYDLFEAATGMRMMHNFFRIGGVAADLPHGWIDKCLDFCDYFLTGVAEYQKFITRNPIFLERVEGVGIIGGEEALNWGLSGPMLRASGIQWDLRKVDHYECYDEFDWEVQWQNEGDSLARYLVRIREMTESIKIIQQALEGIPGGPYENLEIRRFDIDRVKDPEWNDFEYRFISKKPSPTFELSKQELYVRVEAPKGELGIFLVGDRSVFPWRWKIRPPGFINLQILPQLVKRMKLADIMTILGSIDIIMGEVDR</sequence>
<reference key="1">
    <citation type="journal article" date="2007" name="Plant Biotechnol. J.">
        <title>The complete nucleotide sequence of the coffee (Coffea arabica L.) chloroplast genome: organization and implications for biotechnology and phylogenetic relationships amongst angiosperms.</title>
        <authorList>
            <person name="Samson N."/>
            <person name="Bausher M.G."/>
            <person name="Lee S.-B."/>
            <person name="Jansen R.K."/>
            <person name="Daniell H."/>
        </authorList>
    </citation>
    <scope>NUCLEOTIDE SEQUENCE [LARGE SCALE GENOMIC DNA]</scope>
</reference>
<organism>
    <name type="scientific">Coffea arabica</name>
    <name type="common">Arabian coffee</name>
    <dbReference type="NCBI Taxonomy" id="13443"/>
    <lineage>
        <taxon>Eukaryota</taxon>
        <taxon>Viridiplantae</taxon>
        <taxon>Streptophyta</taxon>
        <taxon>Embryophyta</taxon>
        <taxon>Tracheophyta</taxon>
        <taxon>Spermatophyta</taxon>
        <taxon>Magnoliopsida</taxon>
        <taxon>eudicotyledons</taxon>
        <taxon>Gunneridae</taxon>
        <taxon>Pentapetalae</taxon>
        <taxon>asterids</taxon>
        <taxon>lamiids</taxon>
        <taxon>Gentianales</taxon>
        <taxon>Rubiaceae</taxon>
        <taxon>Ixoroideae</taxon>
        <taxon>Gardenieae complex</taxon>
        <taxon>Bertiereae - Coffeeae clade</taxon>
        <taxon>Coffeeae</taxon>
        <taxon>Coffea</taxon>
    </lineage>
</organism>
<gene>
    <name evidence="1" type="primary">ndhH</name>
</gene>
<feature type="chain" id="PRO_0000357979" description="NAD(P)H-quinone oxidoreductase subunit H, chloroplastic">
    <location>
        <begin position="1"/>
        <end position="395"/>
    </location>
</feature>
<evidence type="ECO:0000255" key="1">
    <source>
        <dbReference type="HAMAP-Rule" id="MF_01358"/>
    </source>
</evidence>
<protein>
    <recommendedName>
        <fullName evidence="1">NAD(P)H-quinone oxidoreductase subunit H, chloroplastic</fullName>
        <ecNumber evidence="1">7.1.1.-</ecNumber>
    </recommendedName>
    <alternativeName>
        <fullName>NAD(P)H dehydrogenase subunit H</fullName>
    </alternativeName>
    <alternativeName>
        <fullName evidence="1">NADH-plastoquinone oxidoreductase 49 kDa subunit</fullName>
    </alternativeName>
    <alternativeName>
        <fullName evidence="1">NADH-plastoquinone oxidoreductase subunit H</fullName>
    </alternativeName>
</protein>
<geneLocation type="chloroplast"/>
<comment type="function">
    <text evidence="1">NDH shuttles electrons from NAD(P)H:plastoquinone, via FMN and iron-sulfur (Fe-S) centers, to quinones in the photosynthetic chain and possibly in a chloroplast respiratory chain. The immediate electron acceptor for the enzyme in this species is believed to be plastoquinone. Couples the redox reaction to proton translocation, and thus conserves the redox energy in a proton gradient.</text>
</comment>
<comment type="catalytic activity">
    <reaction evidence="1">
        <text>a plastoquinone + NADH + (n+1) H(+)(in) = a plastoquinol + NAD(+) + n H(+)(out)</text>
        <dbReference type="Rhea" id="RHEA:42608"/>
        <dbReference type="Rhea" id="RHEA-COMP:9561"/>
        <dbReference type="Rhea" id="RHEA-COMP:9562"/>
        <dbReference type="ChEBI" id="CHEBI:15378"/>
        <dbReference type="ChEBI" id="CHEBI:17757"/>
        <dbReference type="ChEBI" id="CHEBI:57540"/>
        <dbReference type="ChEBI" id="CHEBI:57945"/>
        <dbReference type="ChEBI" id="CHEBI:62192"/>
    </reaction>
</comment>
<comment type="catalytic activity">
    <reaction evidence="1">
        <text>a plastoquinone + NADPH + (n+1) H(+)(in) = a plastoquinol + NADP(+) + n H(+)(out)</text>
        <dbReference type="Rhea" id="RHEA:42612"/>
        <dbReference type="Rhea" id="RHEA-COMP:9561"/>
        <dbReference type="Rhea" id="RHEA-COMP:9562"/>
        <dbReference type="ChEBI" id="CHEBI:15378"/>
        <dbReference type="ChEBI" id="CHEBI:17757"/>
        <dbReference type="ChEBI" id="CHEBI:57783"/>
        <dbReference type="ChEBI" id="CHEBI:58349"/>
        <dbReference type="ChEBI" id="CHEBI:62192"/>
    </reaction>
</comment>
<comment type="subunit">
    <text evidence="1">NDH is composed of at least 16 different subunits, 5 of which are encoded in the nucleus.</text>
</comment>
<comment type="subcellular location">
    <subcellularLocation>
        <location evidence="1">Plastid</location>
        <location evidence="1">Chloroplast thylakoid membrane</location>
        <topology evidence="1">Peripheral membrane protein</topology>
        <orientation evidence="1">Stromal side</orientation>
    </subcellularLocation>
</comment>
<comment type="similarity">
    <text evidence="1">Belongs to the complex I 49 kDa subunit family.</text>
</comment>
<accession>A0A391</accession>
<proteinExistence type="inferred from homology"/>
<dbReference type="EC" id="7.1.1.-" evidence="1"/>
<dbReference type="EMBL" id="EF044213">
    <property type="protein sequence ID" value="ABJ89735.1"/>
    <property type="molecule type" value="Genomic_DNA"/>
</dbReference>
<dbReference type="RefSeq" id="YP_817538.1">
    <property type="nucleotide sequence ID" value="NC_008535.1"/>
</dbReference>
<dbReference type="SMR" id="A0A391"/>
<dbReference type="GeneID" id="4421857"/>
<dbReference type="OrthoDB" id="1845069at2759"/>
<dbReference type="Proteomes" id="UP000515148">
    <property type="component" value="Chloroplast Pltd"/>
</dbReference>
<dbReference type="GO" id="GO:0009535">
    <property type="term" value="C:chloroplast thylakoid membrane"/>
    <property type="evidence" value="ECO:0007669"/>
    <property type="project" value="UniProtKB-SubCell"/>
</dbReference>
<dbReference type="GO" id="GO:0051287">
    <property type="term" value="F:NAD binding"/>
    <property type="evidence" value="ECO:0007669"/>
    <property type="project" value="InterPro"/>
</dbReference>
<dbReference type="GO" id="GO:0016655">
    <property type="term" value="F:oxidoreductase activity, acting on NAD(P)H, quinone or similar compound as acceptor"/>
    <property type="evidence" value="ECO:0007669"/>
    <property type="project" value="UniProtKB-UniRule"/>
</dbReference>
<dbReference type="GO" id="GO:0048038">
    <property type="term" value="F:quinone binding"/>
    <property type="evidence" value="ECO:0007669"/>
    <property type="project" value="UniProtKB-KW"/>
</dbReference>
<dbReference type="GO" id="GO:0019684">
    <property type="term" value="P:photosynthesis, light reaction"/>
    <property type="evidence" value="ECO:0007669"/>
    <property type="project" value="UniProtKB-UniRule"/>
</dbReference>
<dbReference type="FunFam" id="1.10.645.10:FF:000003">
    <property type="entry name" value="NAD(P)H-quinone oxidoreductase subunit H, chloroplastic"/>
    <property type="match status" value="1"/>
</dbReference>
<dbReference type="Gene3D" id="1.10.645.10">
    <property type="entry name" value="Cytochrome-c3 Hydrogenase, chain B"/>
    <property type="match status" value="1"/>
</dbReference>
<dbReference type="HAMAP" id="MF_01358">
    <property type="entry name" value="NDH1_NuoD"/>
    <property type="match status" value="1"/>
</dbReference>
<dbReference type="InterPro" id="IPR001135">
    <property type="entry name" value="NADH_Q_OxRdtase_suD"/>
</dbReference>
<dbReference type="InterPro" id="IPR014029">
    <property type="entry name" value="NADH_UbQ_OxRdtase_49kDa_CS"/>
</dbReference>
<dbReference type="InterPro" id="IPR022885">
    <property type="entry name" value="NDH1_su_D/H"/>
</dbReference>
<dbReference type="InterPro" id="IPR029014">
    <property type="entry name" value="NiFe-Hase_large"/>
</dbReference>
<dbReference type="NCBIfam" id="NF004739">
    <property type="entry name" value="PRK06075.1"/>
    <property type="match status" value="1"/>
</dbReference>
<dbReference type="NCBIfam" id="NF005649">
    <property type="entry name" value="PRK07415.1"/>
    <property type="match status" value="1"/>
</dbReference>
<dbReference type="PANTHER" id="PTHR11993:SF10">
    <property type="entry name" value="NADH DEHYDROGENASE [UBIQUINONE] IRON-SULFUR PROTEIN 2, MITOCHONDRIAL"/>
    <property type="match status" value="1"/>
</dbReference>
<dbReference type="PANTHER" id="PTHR11993">
    <property type="entry name" value="NADH-UBIQUINONE OXIDOREDUCTASE 49 KDA SUBUNIT"/>
    <property type="match status" value="1"/>
</dbReference>
<dbReference type="Pfam" id="PF00346">
    <property type="entry name" value="Complex1_49kDa"/>
    <property type="match status" value="1"/>
</dbReference>
<dbReference type="SUPFAM" id="SSF56762">
    <property type="entry name" value="HydB/Nqo4-like"/>
    <property type="match status" value="1"/>
</dbReference>
<dbReference type="PROSITE" id="PS00535">
    <property type="entry name" value="COMPLEX1_49K"/>
    <property type="match status" value="1"/>
</dbReference>